<dbReference type="EC" id="1.5.1.5" evidence="1"/>
<dbReference type="EC" id="3.5.4.9" evidence="1"/>
<dbReference type="EMBL" id="CP000868">
    <property type="protein sequence ID" value="ABX14820.1"/>
    <property type="molecule type" value="Genomic_DNA"/>
</dbReference>
<dbReference type="EMBL" id="AP009385">
    <property type="protein sequence ID" value="BAG44031.1"/>
    <property type="molecule type" value="Genomic_DNA"/>
</dbReference>
<dbReference type="RefSeq" id="WP_012213069.1">
    <property type="nucleotide sequence ID" value="NC_010084.1"/>
</dbReference>
<dbReference type="SMR" id="A9AGS9"/>
<dbReference type="STRING" id="395019.BMULJ_02124"/>
<dbReference type="KEGG" id="bmj:BMULJ_02124"/>
<dbReference type="KEGG" id="bmu:Bmul_1130"/>
<dbReference type="eggNOG" id="COG0190">
    <property type="taxonomic scope" value="Bacteria"/>
</dbReference>
<dbReference type="HOGENOM" id="CLU_034045_2_1_4"/>
<dbReference type="UniPathway" id="UPA00193"/>
<dbReference type="Proteomes" id="UP000008815">
    <property type="component" value="Chromosome 1"/>
</dbReference>
<dbReference type="GO" id="GO:0005829">
    <property type="term" value="C:cytosol"/>
    <property type="evidence" value="ECO:0007669"/>
    <property type="project" value="TreeGrafter"/>
</dbReference>
<dbReference type="GO" id="GO:0004477">
    <property type="term" value="F:methenyltetrahydrofolate cyclohydrolase activity"/>
    <property type="evidence" value="ECO:0007669"/>
    <property type="project" value="UniProtKB-UniRule"/>
</dbReference>
<dbReference type="GO" id="GO:0004488">
    <property type="term" value="F:methylenetetrahydrofolate dehydrogenase (NADP+) activity"/>
    <property type="evidence" value="ECO:0007669"/>
    <property type="project" value="UniProtKB-UniRule"/>
</dbReference>
<dbReference type="GO" id="GO:0000105">
    <property type="term" value="P:L-histidine biosynthetic process"/>
    <property type="evidence" value="ECO:0007669"/>
    <property type="project" value="UniProtKB-KW"/>
</dbReference>
<dbReference type="GO" id="GO:0009086">
    <property type="term" value="P:methionine biosynthetic process"/>
    <property type="evidence" value="ECO:0007669"/>
    <property type="project" value="UniProtKB-KW"/>
</dbReference>
<dbReference type="GO" id="GO:0006164">
    <property type="term" value="P:purine nucleotide biosynthetic process"/>
    <property type="evidence" value="ECO:0007669"/>
    <property type="project" value="UniProtKB-KW"/>
</dbReference>
<dbReference type="GO" id="GO:0035999">
    <property type="term" value="P:tetrahydrofolate interconversion"/>
    <property type="evidence" value="ECO:0007669"/>
    <property type="project" value="UniProtKB-UniRule"/>
</dbReference>
<dbReference type="CDD" id="cd01080">
    <property type="entry name" value="NAD_bind_m-THF_DH_Cyclohyd"/>
    <property type="match status" value="1"/>
</dbReference>
<dbReference type="FunFam" id="3.40.50.720:FF:000094">
    <property type="entry name" value="Bifunctional protein FolD"/>
    <property type="match status" value="1"/>
</dbReference>
<dbReference type="FunFam" id="3.40.50.10860:FF:000005">
    <property type="entry name" value="C-1-tetrahydrofolate synthase, cytoplasmic, putative"/>
    <property type="match status" value="1"/>
</dbReference>
<dbReference type="Gene3D" id="3.40.50.10860">
    <property type="entry name" value="Leucine Dehydrogenase, chain A, domain 1"/>
    <property type="match status" value="1"/>
</dbReference>
<dbReference type="Gene3D" id="3.40.50.720">
    <property type="entry name" value="NAD(P)-binding Rossmann-like Domain"/>
    <property type="match status" value="1"/>
</dbReference>
<dbReference type="HAMAP" id="MF_01576">
    <property type="entry name" value="THF_DHG_CYH"/>
    <property type="match status" value="1"/>
</dbReference>
<dbReference type="InterPro" id="IPR046346">
    <property type="entry name" value="Aminoacid_DH-like_N_sf"/>
</dbReference>
<dbReference type="InterPro" id="IPR036291">
    <property type="entry name" value="NAD(P)-bd_dom_sf"/>
</dbReference>
<dbReference type="InterPro" id="IPR000672">
    <property type="entry name" value="THF_DH/CycHdrlase"/>
</dbReference>
<dbReference type="InterPro" id="IPR020630">
    <property type="entry name" value="THF_DH/CycHdrlase_cat_dom"/>
</dbReference>
<dbReference type="InterPro" id="IPR020867">
    <property type="entry name" value="THF_DH/CycHdrlase_CS"/>
</dbReference>
<dbReference type="InterPro" id="IPR020631">
    <property type="entry name" value="THF_DH/CycHdrlase_NAD-bd_dom"/>
</dbReference>
<dbReference type="NCBIfam" id="NF008058">
    <property type="entry name" value="PRK10792.1"/>
    <property type="match status" value="1"/>
</dbReference>
<dbReference type="NCBIfam" id="NF010783">
    <property type="entry name" value="PRK14186.1"/>
    <property type="match status" value="1"/>
</dbReference>
<dbReference type="NCBIfam" id="NF010786">
    <property type="entry name" value="PRK14189.1"/>
    <property type="match status" value="1"/>
</dbReference>
<dbReference type="PANTHER" id="PTHR48099:SF5">
    <property type="entry name" value="C-1-TETRAHYDROFOLATE SYNTHASE, CYTOPLASMIC"/>
    <property type="match status" value="1"/>
</dbReference>
<dbReference type="PANTHER" id="PTHR48099">
    <property type="entry name" value="C-1-TETRAHYDROFOLATE SYNTHASE, CYTOPLASMIC-RELATED"/>
    <property type="match status" value="1"/>
</dbReference>
<dbReference type="Pfam" id="PF00763">
    <property type="entry name" value="THF_DHG_CYH"/>
    <property type="match status" value="1"/>
</dbReference>
<dbReference type="Pfam" id="PF02882">
    <property type="entry name" value="THF_DHG_CYH_C"/>
    <property type="match status" value="1"/>
</dbReference>
<dbReference type="PRINTS" id="PR00085">
    <property type="entry name" value="THFDHDRGNASE"/>
</dbReference>
<dbReference type="SUPFAM" id="SSF53223">
    <property type="entry name" value="Aminoacid dehydrogenase-like, N-terminal domain"/>
    <property type="match status" value="1"/>
</dbReference>
<dbReference type="SUPFAM" id="SSF51735">
    <property type="entry name" value="NAD(P)-binding Rossmann-fold domains"/>
    <property type="match status" value="1"/>
</dbReference>
<dbReference type="PROSITE" id="PS00766">
    <property type="entry name" value="THF_DHG_CYH_1"/>
    <property type="match status" value="1"/>
</dbReference>
<dbReference type="PROSITE" id="PS00767">
    <property type="entry name" value="THF_DHG_CYH_2"/>
    <property type="match status" value="1"/>
</dbReference>
<comment type="function">
    <text evidence="1">Catalyzes the oxidation of 5,10-methylenetetrahydrofolate to 5,10-methenyltetrahydrofolate and then the hydrolysis of 5,10-methenyltetrahydrofolate to 10-formyltetrahydrofolate.</text>
</comment>
<comment type="catalytic activity">
    <reaction evidence="1">
        <text>(6R)-5,10-methylene-5,6,7,8-tetrahydrofolate + NADP(+) = (6R)-5,10-methenyltetrahydrofolate + NADPH</text>
        <dbReference type="Rhea" id="RHEA:22812"/>
        <dbReference type="ChEBI" id="CHEBI:15636"/>
        <dbReference type="ChEBI" id="CHEBI:57455"/>
        <dbReference type="ChEBI" id="CHEBI:57783"/>
        <dbReference type="ChEBI" id="CHEBI:58349"/>
        <dbReference type="EC" id="1.5.1.5"/>
    </reaction>
</comment>
<comment type="catalytic activity">
    <reaction evidence="1">
        <text>(6R)-5,10-methenyltetrahydrofolate + H2O = (6R)-10-formyltetrahydrofolate + H(+)</text>
        <dbReference type="Rhea" id="RHEA:23700"/>
        <dbReference type="ChEBI" id="CHEBI:15377"/>
        <dbReference type="ChEBI" id="CHEBI:15378"/>
        <dbReference type="ChEBI" id="CHEBI:57455"/>
        <dbReference type="ChEBI" id="CHEBI:195366"/>
        <dbReference type="EC" id="3.5.4.9"/>
    </reaction>
</comment>
<comment type="pathway">
    <text evidence="1">One-carbon metabolism; tetrahydrofolate interconversion.</text>
</comment>
<comment type="subunit">
    <text evidence="1">Homodimer.</text>
</comment>
<comment type="similarity">
    <text evidence="1">Belongs to the tetrahydrofolate dehydrogenase/cyclohydrolase family.</text>
</comment>
<reference key="1">
    <citation type="submission" date="2007-10" db="EMBL/GenBank/DDBJ databases">
        <title>Complete sequence of chromosome 1 of Burkholderia multivorans ATCC 17616.</title>
        <authorList>
            <person name="Copeland A."/>
            <person name="Lucas S."/>
            <person name="Lapidus A."/>
            <person name="Barry K."/>
            <person name="Glavina del Rio T."/>
            <person name="Dalin E."/>
            <person name="Tice H."/>
            <person name="Pitluck S."/>
            <person name="Chain P."/>
            <person name="Malfatti S."/>
            <person name="Shin M."/>
            <person name="Vergez L."/>
            <person name="Schmutz J."/>
            <person name="Larimer F."/>
            <person name="Land M."/>
            <person name="Hauser L."/>
            <person name="Kyrpides N."/>
            <person name="Kim E."/>
            <person name="Tiedje J."/>
            <person name="Richardson P."/>
        </authorList>
    </citation>
    <scope>NUCLEOTIDE SEQUENCE [LARGE SCALE GENOMIC DNA]</scope>
    <source>
        <strain>ATCC 17616 / 249</strain>
    </source>
</reference>
<reference key="2">
    <citation type="submission" date="2007-04" db="EMBL/GenBank/DDBJ databases">
        <title>Complete genome sequence of Burkholderia multivorans ATCC 17616.</title>
        <authorList>
            <person name="Ohtsubo Y."/>
            <person name="Yamashita A."/>
            <person name="Kurokawa K."/>
            <person name="Takami H."/>
            <person name="Yuhara S."/>
            <person name="Nishiyama E."/>
            <person name="Endo R."/>
            <person name="Miyazaki R."/>
            <person name="Ono A."/>
            <person name="Yano K."/>
            <person name="Ito M."/>
            <person name="Sota M."/>
            <person name="Yuji N."/>
            <person name="Hattori M."/>
            <person name="Tsuda M."/>
        </authorList>
    </citation>
    <scope>NUCLEOTIDE SEQUENCE [LARGE SCALE GENOMIC DNA]</scope>
    <source>
        <strain>ATCC 17616 / 249</strain>
    </source>
</reference>
<proteinExistence type="inferred from homology"/>
<protein>
    <recommendedName>
        <fullName evidence="1">Bifunctional protein FolD</fullName>
    </recommendedName>
    <domain>
        <recommendedName>
            <fullName evidence="1">Methylenetetrahydrofolate dehydrogenase</fullName>
            <ecNumber evidence="1">1.5.1.5</ecNumber>
        </recommendedName>
    </domain>
    <domain>
        <recommendedName>
            <fullName evidence="1">Methenyltetrahydrofolate cyclohydrolase</fullName>
            <ecNumber evidence="1">3.5.4.9</ecNumber>
        </recommendedName>
    </domain>
</protein>
<sequence>MTALLIDGNALSKTLRAQAAERAAALTARGHRPGLAVILVGDNPASEVYVRNKIKACEDNGFFSQKDTYPATLSEADLLARIDELNRDPKIHGILVQLPLPAHIDSHKVIEAIAPEKDVDGFHVANAGALMTGKPLFRPCTPYGVMKMFAAHGIALQGANAVVIGRSNIVGKPMAMLLLEAGATVTICHSKTRDLAAHTRQADIIVAAVGKRNILTADMVKPGATVIDVGMNRDDAGKLCGDVDFAGVKEVAGYITPVPGGVGPMTITMLLINTLESAERAAAAA</sequence>
<evidence type="ECO:0000255" key="1">
    <source>
        <dbReference type="HAMAP-Rule" id="MF_01576"/>
    </source>
</evidence>
<gene>
    <name evidence="1" type="primary">folD</name>
    <name type="ordered locus">Bmul_1130</name>
    <name type="ordered locus">BMULJ_02124</name>
</gene>
<organism>
    <name type="scientific">Burkholderia multivorans (strain ATCC 17616 / 249)</name>
    <dbReference type="NCBI Taxonomy" id="395019"/>
    <lineage>
        <taxon>Bacteria</taxon>
        <taxon>Pseudomonadati</taxon>
        <taxon>Pseudomonadota</taxon>
        <taxon>Betaproteobacteria</taxon>
        <taxon>Burkholderiales</taxon>
        <taxon>Burkholderiaceae</taxon>
        <taxon>Burkholderia</taxon>
        <taxon>Burkholderia cepacia complex</taxon>
    </lineage>
</organism>
<keyword id="KW-0028">Amino-acid biosynthesis</keyword>
<keyword id="KW-0368">Histidine biosynthesis</keyword>
<keyword id="KW-0378">Hydrolase</keyword>
<keyword id="KW-0486">Methionine biosynthesis</keyword>
<keyword id="KW-0511">Multifunctional enzyme</keyword>
<keyword id="KW-0521">NADP</keyword>
<keyword id="KW-0554">One-carbon metabolism</keyword>
<keyword id="KW-0560">Oxidoreductase</keyword>
<keyword id="KW-0658">Purine biosynthesis</keyword>
<keyword id="KW-1185">Reference proteome</keyword>
<accession>A9AGS9</accession>
<feature type="chain" id="PRO_1000147449" description="Bifunctional protein FolD">
    <location>
        <begin position="1"/>
        <end position="285"/>
    </location>
</feature>
<feature type="binding site" evidence="1">
    <location>
        <begin position="165"/>
        <end position="167"/>
    </location>
    <ligand>
        <name>NADP(+)</name>
        <dbReference type="ChEBI" id="CHEBI:58349"/>
    </ligand>
</feature>
<feature type="binding site" evidence="1">
    <location>
        <position position="190"/>
    </location>
    <ligand>
        <name>NADP(+)</name>
        <dbReference type="ChEBI" id="CHEBI:58349"/>
    </ligand>
</feature>
<name>FOLD_BURM1</name>